<organism>
    <name type="scientific">Proteus mirabilis (strain HI4320)</name>
    <dbReference type="NCBI Taxonomy" id="529507"/>
    <lineage>
        <taxon>Bacteria</taxon>
        <taxon>Pseudomonadati</taxon>
        <taxon>Pseudomonadota</taxon>
        <taxon>Gammaproteobacteria</taxon>
        <taxon>Enterobacterales</taxon>
        <taxon>Morganellaceae</taxon>
        <taxon>Proteus</taxon>
    </lineage>
</organism>
<accession>B4F234</accession>
<gene>
    <name evidence="1" type="primary">cysI</name>
    <name type="ordered locus">PMI2249</name>
</gene>
<proteinExistence type="inferred from homology"/>
<keyword id="KW-0004">4Fe-4S</keyword>
<keyword id="KW-0028">Amino-acid biosynthesis</keyword>
<keyword id="KW-0198">Cysteine biosynthesis</keyword>
<keyword id="KW-0349">Heme</keyword>
<keyword id="KW-0408">Iron</keyword>
<keyword id="KW-0411">Iron-sulfur</keyword>
<keyword id="KW-0479">Metal-binding</keyword>
<keyword id="KW-0521">NADP</keyword>
<keyword id="KW-0560">Oxidoreductase</keyword>
<keyword id="KW-1185">Reference proteome</keyword>
<protein>
    <recommendedName>
        <fullName evidence="1">Sulfite reductase [NADPH] hemoprotein beta-component</fullName>
        <shortName evidence="1">SiR-HP</shortName>
        <shortName evidence="1">SiRHP</shortName>
        <ecNumber evidence="1">1.8.1.2</ecNumber>
    </recommendedName>
</protein>
<name>CYSI_PROMH</name>
<comment type="function">
    <text evidence="1">Component of the sulfite reductase complex that catalyzes the 6-electron reduction of sulfite to sulfide. This is one of several activities required for the biosynthesis of L-cysteine from sulfate.</text>
</comment>
<comment type="catalytic activity">
    <reaction evidence="1">
        <text>hydrogen sulfide + 3 NADP(+) + 3 H2O = sulfite + 3 NADPH + 4 H(+)</text>
        <dbReference type="Rhea" id="RHEA:13801"/>
        <dbReference type="ChEBI" id="CHEBI:15377"/>
        <dbReference type="ChEBI" id="CHEBI:15378"/>
        <dbReference type="ChEBI" id="CHEBI:17359"/>
        <dbReference type="ChEBI" id="CHEBI:29919"/>
        <dbReference type="ChEBI" id="CHEBI:57783"/>
        <dbReference type="ChEBI" id="CHEBI:58349"/>
        <dbReference type="EC" id="1.8.1.2"/>
    </reaction>
</comment>
<comment type="cofactor">
    <cofactor evidence="1">
        <name>siroheme</name>
        <dbReference type="ChEBI" id="CHEBI:60052"/>
    </cofactor>
    <text evidence="1">Binds 1 siroheme per subunit.</text>
</comment>
<comment type="cofactor">
    <cofactor evidence="1">
        <name>[4Fe-4S] cluster</name>
        <dbReference type="ChEBI" id="CHEBI:49883"/>
    </cofactor>
    <text evidence="1">Binds 1 [4Fe-4S] cluster per subunit.</text>
</comment>
<comment type="pathway">
    <text evidence="1">Sulfur metabolism; hydrogen sulfide biosynthesis; hydrogen sulfide from sulfite (NADPH route): step 1/1.</text>
</comment>
<comment type="subunit">
    <text evidence="1">Alpha(8)-beta(8). The alpha component is a flavoprotein, the beta component is a hemoprotein.</text>
</comment>
<comment type="similarity">
    <text evidence="1">Belongs to the nitrite and sulfite reductase 4Fe-4S domain family.</text>
</comment>
<evidence type="ECO:0000255" key="1">
    <source>
        <dbReference type="HAMAP-Rule" id="MF_01540"/>
    </source>
</evidence>
<sequence length="576" mass="64753">MKSQTQAPLVVEGKLSDSERMKKESNFLRGTISDDLQNGLTGGFEGDNFLLIRFHGMYQQDDRDIRAERAQQLLEPRHAMMLRCRLPGGVITPKQWLSIDKFASENTLYGSIRITNRQTFQFHGILKGHVKPAHQMLASTGLDALATANDVNRNVLCTSNPEQSSLHQEAYEWAKKLSEHLLPRTHAYAEIWLDKEKVATTDEEPILGETYLPRKFKTSVVIPPYNDVDLHANDMNFIAIAENGHLVGFNVLVGGGLAMTHGDKKTFPRLASEFGYIPIDKTLAVAEAIVTTQRDWGNRTERKNAKTKYTLERVGIETFKQEVERRSGVMFDMIRPYQFTHRGDQIGWLKGVDNKWYLTLFIESGRLIDKPNAPLKTGVAEIAKVHLGDFRLTANQNLIVAGVPEAQKEQIEAIARQYGLINDEVTPLRKHAMACVSFPTCPLAMAEAERFLPAFTDTLDNIMAKYGVSDEHIVVRVTGCPNGCGRAMLAEVGLVGKAPDRYNLHLGGNRMGTRIPRMYRENISSQEIIEILDTLIGQWAISRELNEGFGDFLIRTDVIKPVVNSAIDFYEVQEVI</sequence>
<feature type="chain" id="PRO_1000146652" description="Sulfite reductase [NADPH] hemoprotein beta-component">
    <location>
        <begin position="1"/>
        <end position="576"/>
    </location>
</feature>
<feature type="binding site" evidence="1">
    <location>
        <position position="435"/>
    </location>
    <ligand>
        <name>[4Fe-4S] cluster</name>
        <dbReference type="ChEBI" id="CHEBI:49883"/>
    </ligand>
</feature>
<feature type="binding site" evidence="1">
    <location>
        <position position="441"/>
    </location>
    <ligand>
        <name>[4Fe-4S] cluster</name>
        <dbReference type="ChEBI" id="CHEBI:49883"/>
    </ligand>
</feature>
<feature type="binding site" evidence="1">
    <location>
        <position position="480"/>
    </location>
    <ligand>
        <name>[4Fe-4S] cluster</name>
        <dbReference type="ChEBI" id="CHEBI:49883"/>
    </ligand>
</feature>
<feature type="binding site" evidence="1">
    <location>
        <position position="484"/>
    </location>
    <ligand>
        <name>[4Fe-4S] cluster</name>
        <dbReference type="ChEBI" id="CHEBI:49883"/>
    </ligand>
</feature>
<feature type="binding site" description="axial binding residue" evidence="1">
    <location>
        <position position="484"/>
    </location>
    <ligand>
        <name>siroheme</name>
        <dbReference type="ChEBI" id="CHEBI:60052"/>
    </ligand>
    <ligandPart>
        <name>Fe</name>
        <dbReference type="ChEBI" id="CHEBI:18248"/>
    </ligandPart>
</feature>
<reference key="1">
    <citation type="journal article" date="2008" name="J. Bacteriol.">
        <title>Complete genome sequence of uropathogenic Proteus mirabilis, a master of both adherence and motility.</title>
        <authorList>
            <person name="Pearson M.M."/>
            <person name="Sebaihia M."/>
            <person name="Churcher C."/>
            <person name="Quail M.A."/>
            <person name="Seshasayee A.S."/>
            <person name="Luscombe N.M."/>
            <person name="Abdellah Z."/>
            <person name="Arrosmith C."/>
            <person name="Atkin B."/>
            <person name="Chillingworth T."/>
            <person name="Hauser H."/>
            <person name="Jagels K."/>
            <person name="Moule S."/>
            <person name="Mungall K."/>
            <person name="Norbertczak H."/>
            <person name="Rabbinowitsch E."/>
            <person name="Walker D."/>
            <person name="Whithead S."/>
            <person name="Thomson N.R."/>
            <person name="Rather P.N."/>
            <person name="Parkhill J."/>
            <person name="Mobley H.L.T."/>
        </authorList>
    </citation>
    <scope>NUCLEOTIDE SEQUENCE [LARGE SCALE GENOMIC DNA]</scope>
    <source>
        <strain>HI4320</strain>
    </source>
</reference>
<dbReference type="EC" id="1.8.1.2" evidence="1"/>
<dbReference type="EMBL" id="AM942759">
    <property type="protein sequence ID" value="CAR44463.1"/>
    <property type="molecule type" value="Genomic_DNA"/>
</dbReference>
<dbReference type="RefSeq" id="WP_004248698.1">
    <property type="nucleotide sequence ID" value="NC_010554.1"/>
</dbReference>
<dbReference type="SMR" id="B4F234"/>
<dbReference type="EnsemblBacteria" id="CAR44463">
    <property type="protein sequence ID" value="CAR44463"/>
    <property type="gene ID" value="PMI2249"/>
</dbReference>
<dbReference type="GeneID" id="6803372"/>
<dbReference type="KEGG" id="pmr:PMI2249"/>
<dbReference type="eggNOG" id="COG0155">
    <property type="taxonomic scope" value="Bacteria"/>
</dbReference>
<dbReference type="HOGENOM" id="CLU_001975_3_2_6"/>
<dbReference type="UniPathway" id="UPA00140">
    <property type="reaction ID" value="UER00207"/>
</dbReference>
<dbReference type="Proteomes" id="UP000008319">
    <property type="component" value="Chromosome"/>
</dbReference>
<dbReference type="GO" id="GO:0009337">
    <property type="term" value="C:sulfite reductase complex (NADPH)"/>
    <property type="evidence" value="ECO:0007669"/>
    <property type="project" value="InterPro"/>
</dbReference>
<dbReference type="GO" id="GO:0051539">
    <property type="term" value="F:4 iron, 4 sulfur cluster binding"/>
    <property type="evidence" value="ECO:0007669"/>
    <property type="project" value="UniProtKB-KW"/>
</dbReference>
<dbReference type="GO" id="GO:0020037">
    <property type="term" value="F:heme binding"/>
    <property type="evidence" value="ECO:0007669"/>
    <property type="project" value="InterPro"/>
</dbReference>
<dbReference type="GO" id="GO:0046872">
    <property type="term" value="F:metal ion binding"/>
    <property type="evidence" value="ECO:0007669"/>
    <property type="project" value="UniProtKB-KW"/>
</dbReference>
<dbReference type="GO" id="GO:0050661">
    <property type="term" value="F:NADP binding"/>
    <property type="evidence" value="ECO:0007669"/>
    <property type="project" value="InterPro"/>
</dbReference>
<dbReference type="GO" id="GO:0050311">
    <property type="term" value="F:sulfite reductase (ferredoxin) activity"/>
    <property type="evidence" value="ECO:0007669"/>
    <property type="project" value="TreeGrafter"/>
</dbReference>
<dbReference type="GO" id="GO:0004783">
    <property type="term" value="F:sulfite reductase (NADPH) activity"/>
    <property type="evidence" value="ECO:0007669"/>
    <property type="project" value="UniProtKB-UniRule"/>
</dbReference>
<dbReference type="GO" id="GO:0019344">
    <property type="term" value="P:cysteine biosynthetic process"/>
    <property type="evidence" value="ECO:0007669"/>
    <property type="project" value="UniProtKB-KW"/>
</dbReference>
<dbReference type="GO" id="GO:0070814">
    <property type="term" value="P:hydrogen sulfide biosynthetic process"/>
    <property type="evidence" value="ECO:0007669"/>
    <property type="project" value="UniProtKB-UniRule"/>
</dbReference>
<dbReference type="GO" id="GO:0000103">
    <property type="term" value="P:sulfate assimilation"/>
    <property type="evidence" value="ECO:0007669"/>
    <property type="project" value="UniProtKB-UniRule"/>
</dbReference>
<dbReference type="FunFam" id="3.30.413.10:FF:000003">
    <property type="entry name" value="Sulfite reductase [NADPH] hemoprotein beta-component"/>
    <property type="match status" value="1"/>
</dbReference>
<dbReference type="FunFam" id="3.30.413.10:FF:000004">
    <property type="entry name" value="Sulfite reductase [NADPH] hemoprotein beta-component"/>
    <property type="match status" value="1"/>
</dbReference>
<dbReference type="Gene3D" id="3.30.413.10">
    <property type="entry name" value="Sulfite Reductase Hemoprotein, domain 1"/>
    <property type="match status" value="2"/>
</dbReference>
<dbReference type="HAMAP" id="MF_01540">
    <property type="entry name" value="CysI"/>
    <property type="match status" value="1"/>
</dbReference>
<dbReference type="InterPro" id="IPR011786">
    <property type="entry name" value="CysI"/>
</dbReference>
<dbReference type="InterPro" id="IPR005117">
    <property type="entry name" value="NiRdtase/SiRdtase_haem-b_fer"/>
</dbReference>
<dbReference type="InterPro" id="IPR036136">
    <property type="entry name" value="Nit/Sulf_reduc_fer-like_dom_sf"/>
</dbReference>
<dbReference type="InterPro" id="IPR006067">
    <property type="entry name" value="NO2/SO3_Rdtase_4Fe4S_dom"/>
</dbReference>
<dbReference type="InterPro" id="IPR045169">
    <property type="entry name" value="NO2/SO3_Rdtase_4Fe4S_prot"/>
</dbReference>
<dbReference type="InterPro" id="IPR045854">
    <property type="entry name" value="NO2/SO3_Rdtase_4Fe4S_sf"/>
</dbReference>
<dbReference type="InterPro" id="IPR006066">
    <property type="entry name" value="NO2/SO3_Rdtase_FeS/sirohaem_BS"/>
</dbReference>
<dbReference type="NCBIfam" id="TIGR02041">
    <property type="entry name" value="CysI"/>
    <property type="match status" value="1"/>
</dbReference>
<dbReference type="NCBIfam" id="NF010029">
    <property type="entry name" value="PRK13504.1"/>
    <property type="match status" value="1"/>
</dbReference>
<dbReference type="PANTHER" id="PTHR11493:SF47">
    <property type="entry name" value="SULFITE REDUCTASE [NADPH] SUBUNIT BETA"/>
    <property type="match status" value="1"/>
</dbReference>
<dbReference type="PANTHER" id="PTHR11493">
    <property type="entry name" value="SULFITE REDUCTASE [NADPH] SUBUNIT BETA-RELATED"/>
    <property type="match status" value="1"/>
</dbReference>
<dbReference type="Pfam" id="PF01077">
    <property type="entry name" value="NIR_SIR"/>
    <property type="match status" value="1"/>
</dbReference>
<dbReference type="Pfam" id="PF03460">
    <property type="entry name" value="NIR_SIR_ferr"/>
    <property type="match status" value="2"/>
</dbReference>
<dbReference type="PRINTS" id="PR00397">
    <property type="entry name" value="SIROHAEM"/>
</dbReference>
<dbReference type="SUPFAM" id="SSF56014">
    <property type="entry name" value="Nitrite and sulphite reductase 4Fe-4S domain-like"/>
    <property type="match status" value="2"/>
</dbReference>
<dbReference type="SUPFAM" id="SSF55124">
    <property type="entry name" value="Nitrite/Sulfite reductase N-terminal domain-like"/>
    <property type="match status" value="2"/>
</dbReference>
<dbReference type="PROSITE" id="PS00365">
    <property type="entry name" value="NIR_SIR"/>
    <property type="match status" value="1"/>
</dbReference>